<sequence>MHKQAPIQRRKSTRIYVGNVPIGDGAPIAVQSMTNTRTTDVEATVNQIKALERVGADIVRVSVPTMDAAEAFKLIKQQVNVPLVADIHFDYRIALKVAEYGVDCLRINPGNIGNEERIRMVVDCARDKNIPIRIGVNAGSLEKDLQEKYGEPTPQALLESAMRHVDHLDRLNFDQFKVSVKASDVFLAVESYRLLAKQIDQPLHLGITEAGGARSGAVKSAIGLGLLLSEGIGDTLRVSLAADPVEEIKVGFDILKSLRIRARGINFIACPTCSRQEFDVIGTVNALEQRLEDIITPMDVSIIGCVVNGPGEALVSTLGVTGGNKKSGLYEDGVRKDRLDNDDMIAQLESRIRAKASQLDEARRIDVLQVEK</sequence>
<reference key="1">
    <citation type="journal article" date="2008" name="Genome Res.">
        <title>Comparative genome analysis of Salmonella enteritidis PT4 and Salmonella gallinarum 287/91 provides insights into evolutionary and host adaptation pathways.</title>
        <authorList>
            <person name="Thomson N.R."/>
            <person name="Clayton D.J."/>
            <person name="Windhorst D."/>
            <person name="Vernikos G."/>
            <person name="Davidson S."/>
            <person name="Churcher C."/>
            <person name="Quail M.A."/>
            <person name="Stevens M."/>
            <person name="Jones M.A."/>
            <person name="Watson M."/>
            <person name="Barron A."/>
            <person name="Layton A."/>
            <person name="Pickard D."/>
            <person name="Kingsley R.A."/>
            <person name="Bignell A."/>
            <person name="Clark L."/>
            <person name="Harris B."/>
            <person name="Ormond D."/>
            <person name="Abdellah Z."/>
            <person name="Brooks K."/>
            <person name="Cherevach I."/>
            <person name="Chillingworth T."/>
            <person name="Woodward J."/>
            <person name="Norberczak H."/>
            <person name="Lord A."/>
            <person name="Arrowsmith C."/>
            <person name="Jagels K."/>
            <person name="Moule S."/>
            <person name="Mungall K."/>
            <person name="Saunders M."/>
            <person name="Whitehead S."/>
            <person name="Chabalgoity J.A."/>
            <person name="Maskell D."/>
            <person name="Humphreys T."/>
            <person name="Roberts M."/>
            <person name="Barrow P.A."/>
            <person name="Dougan G."/>
            <person name="Parkhill J."/>
        </authorList>
    </citation>
    <scope>NUCLEOTIDE SEQUENCE [LARGE SCALE GENOMIC DNA]</scope>
    <source>
        <strain>287/91 / NCTC 13346</strain>
    </source>
</reference>
<evidence type="ECO:0000255" key="1">
    <source>
        <dbReference type="HAMAP-Rule" id="MF_00159"/>
    </source>
</evidence>
<dbReference type="EC" id="1.17.7.3" evidence="1"/>
<dbReference type="EMBL" id="AM933173">
    <property type="protein sequence ID" value="CAR38378.1"/>
    <property type="molecule type" value="Genomic_DNA"/>
</dbReference>
<dbReference type="RefSeq" id="WP_000549506.1">
    <property type="nucleotide sequence ID" value="NC_011274.1"/>
</dbReference>
<dbReference type="SMR" id="B5RCZ2"/>
<dbReference type="KEGG" id="seg:SG2558"/>
<dbReference type="HOGENOM" id="CLU_042258_0_0_6"/>
<dbReference type="UniPathway" id="UPA00056">
    <property type="reaction ID" value="UER00096"/>
</dbReference>
<dbReference type="Proteomes" id="UP000008321">
    <property type="component" value="Chromosome"/>
</dbReference>
<dbReference type="GO" id="GO:0051539">
    <property type="term" value="F:4 iron, 4 sulfur cluster binding"/>
    <property type="evidence" value="ECO:0007669"/>
    <property type="project" value="UniProtKB-UniRule"/>
</dbReference>
<dbReference type="GO" id="GO:0046429">
    <property type="term" value="F:4-hydroxy-3-methylbut-2-en-1-yl diphosphate synthase activity (ferredoxin)"/>
    <property type="evidence" value="ECO:0007669"/>
    <property type="project" value="UniProtKB-UniRule"/>
</dbReference>
<dbReference type="GO" id="GO:0141197">
    <property type="term" value="F:4-hydroxy-3-methylbut-2-enyl-diphosphate synthase activity (flavodoxin)"/>
    <property type="evidence" value="ECO:0007669"/>
    <property type="project" value="UniProtKB-EC"/>
</dbReference>
<dbReference type="GO" id="GO:0005506">
    <property type="term" value="F:iron ion binding"/>
    <property type="evidence" value="ECO:0007669"/>
    <property type="project" value="InterPro"/>
</dbReference>
<dbReference type="GO" id="GO:0019288">
    <property type="term" value="P:isopentenyl diphosphate biosynthetic process, methylerythritol 4-phosphate pathway"/>
    <property type="evidence" value="ECO:0007669"/>
    <property type="project" value="UniProtKB-UniRule"/>
</dbReference>
<dbReference type="GO" id="GO:0016114">
    <property type="term" value="P:terpenoid biosynthetic process"/>
    <property type="evidence" value="ECO:0007669"/>
    <property type="project" value="InterPro"/>
</dbReference>
<dbReference type="FunFam" id="3.20.20.20:FF:000001">
    <property type="entry name" value="4-hydroxy-3-methylbut-2-en-1-yl diphosphate synthase (flavodoxin)"/>
    <property type="match status" value="1"/>
</dbReference>
<dbReference type="FunFam" id="3.30.413.10:FF:000002">
    <property type="entry name" value="4-hydroxy-3-methylbut-2-en-1-yl diphosphate synthase (flavodoxin)"/>
    <property type="match status" value="1"/>
</dbReference>
<dbReference type="Gene3D" id="3.20.20.20">
    <property type="entry name" value="Dihydropteroate synthase-like"/>
    <property type="match status" value="1"/>
</dbReference>
<dbReference type="Gene3D" id="3.30.413.10">
    <property type="entry name" value="Sulfite Reductase Hemoprotein, domain 1"/>
    <property type="match status" value="1"/>
</dbReference>
<dbReference type="HAMAP" id="MF_00159">
    <property type="entry name" value="IspG"/>
    <property type="match status" value="1"/>
</dbReference>
<dbReference type="InterPro" id="IPR011005">
    <property type="entry name" value="Dihydropteroate_synth-like_sf"/>
</dbReference>
<dbReference type="InterPro" id="IPR016425">
    <property type="entry name" value="IspG_bac"/>
</dbReference>
<dbReference type="InterPro" id="IPR004588">
    <property type="entry name" value="IspG_bac-typ"/>
</dbReference>
<dbReference type="InterPro" id="IPR045854">
    <property type="entry name" value="NO2/SO3_Rdtase_4Fe4S_sf"/>
</dbReference>
<dbReference type="NCBIfam" id="TIGR00612">
    <property type="entry name" value="ispG_gcpE"/>
    <property type="match status" value="1"/>
</dbReference>
<dbReference type="NCBIfam" id="NF001540">
    <property type="entry name" value="PRK00366.1"/>
    <property type="match status" value="1"/>
</dbReference>
<dbReference type="PANTHER" id="PTHR30454">
    <property type="entry name" value="4-HYDROXY-3-METHYLBUT-2-EN-1-YL DIPHOSPHATE SYNTHASE"/>
    <property type="match status" value="1"/>
</dbReference>
<dbReference type="PANTHER" id="PTHR30454:SF0">
    <property type="entry name" value="4-HYDROXY-3-METHYLBUT-2-EN-1-YL DIPHOSPHATE SYNTHASE (FERREDOXIN), CHLOROPLASTIC"/>
    <property type="match status" value="1"/>
</dbReference>
<dbReference type="Pfam" id="PF04551">
    <property type="entry name" value="GcpE"/>
    <property type="match status" value="1"/>
</dbReference>
<dbReference type="PIRSF" id="PIRSF004640">
    <property type="entry name" value="IspG"/>
    <property type="match status" value="1"/>
</dbReference>
<dbReference type="SUPFAM" id="SSF51717">
    <property type="entry name" value="Dihydropteroate synthetase-like"/>
    <property type="match status" value="1"/>
</dbReference>
<dbReference type="SUPFAM" id="SSF56014">
    <property type="entry name" value="Nitrite and sulphite reductase 4Fe-4S domain-like"/>
    <property type="match status" value="1"/>
</dbReference>
<gene>
    <name evidence="1" type="primary">ispG</name>
    <name type="ordered locus">SG2558</name>
</gene>
<protein>
    <recommendedName>
        <fullName evidence="1">4-hydroxy-3-methylbut-2-en-1-yl diphosphate synthase (flavodoxin)</fullName>
        <ecNumber evidence="1">1.17.7.3</ecNumber>
    </recommendedName>
    <alternativeName>
        <fullName evidence="1">1-hydroxy-2-methyl-2-(E)-butenyl 4-diphosphate synthase</fullName>
    </alternativeName>
</protein>
<comment type="function">
    <text evidence="1">Converts 2C-methyl-D-erythritol 2,4-cyclodiphosphate (ME-2,4cPP) into 1-hydroxy-2-methyl-2-(E)-butenyl 4-diphosphate.</text>
</comment>
<comment type="catalytic activity">
    <reaction evidence="1">
        <text>(2E)-4-hydroxy-3-methylbut-2-enyl diphosphate + oxidized [flavodoxin] + H2O + 2 H(+) = 2-C-methyl-D-erythritol 2,4-cyclic diphosphate + reduced [flavodoxin]</text>
        <dbReference type="Rhea" id="RHEA:43604"/>
        <dbReference type="Rhea" id="RHEA-COMP:10622"/>
        <dbReference type="Rhea" id="RHEA-COMP:10623"/>
        <dbReference type="ChEBI" id="CHEBI:15377"/>
        <dbReference type="ChEBI" id="CHEBI:15378"/>
        <dbReference type="ChEBI" id="CHEBI:57618"/>
        <dbReference type="ChEBI" id="CHEBI:58210"/>
        <dbReference type="ChEBI" id="CHEBI:58483"/>
        <dbReference type="ChEBI" id="CHEBI:128753"/>
        <dbReference type="EC" id="1.17.7.3"/>
    </reaction>
</comment>
<comment type="cofactor">
    <cofactor evidence="1">
        <name>[4Fe-4S] cluster</name>
        <dbReference type="ChEBI" id="CHEBI:49883"/>
    </cofactor>
    <text evidence="1">Binds 1 [4Fe-4S] cluster.</text>
</comment>
<comment type="pathway">
    <text evidence="1">Isoprenoid biosynthesis; isopentenyl diphosphate biosynthesis via DXP pathway; isopentenyl diphosphate from 1-deoxy-D-xylulose 5-phosphate: step 5/6.</text>
</comment>
<comment type="similarity">
    <text evidence="1">Belongs to the IspG family.</text>
</comment>
<keyword id="KW-0004">4Fe-4S</keyword>
<keyword id="KW-0408">Iron</keyword>
<keyword id="KW-0411">Iron-sulfur</keyword>
<keyword id="KW-0414">Isoprene biosynthesis</keyword>
<keyword id="KW-0479">Metal-binding</keyword>
<keyword id="KW-0560">Oxidoreductase</keyword>
<organism>
    <name type="scientific">Salmonella gallinarum (strain 287/91 / NCTC 13346)</name>
    <dbReference type="NCBI Taxonomy" id="550538"/>
    <lineage>
        <taxon>Bacteria</taxon>
        <taxon>Pseudomonadati</taxon>
        <taxon>Pseudomonadota</taxon>
        <taxon>Gammaproteobacteria</taxon>
        <taxon>Enterobacterales</taxon>
        <taxon>Enterobacteriaceae</taxon>
        <taxon>Salmonella</taxon>
    </lineage>
</organism>
<proteinExistence type="inferred from homology"/>
<feature type="chain" id="PRO_1000097181" description="4-hydroxy-3-methylbut-2-en-1-yl diphosphate synthase (flavodoxin)">
    <location>
        <begin position="1"/>
        <end position="372"/>
    </location>
</feature>
<feature type="binding site" evidence="1">
    <location>
        <position position="270"/>
    </location>
    <ligand>
        <name>[4Fe-4S] cluster</name>
        <dbReference type="ChEBI" id="CHEBI:49883"/>
    </ligand>
</feature>
<feature type="binding site" evidence="1">
    <location>
        <position position="273"/>
    </location>
    <ligand>
        <name>[4Fe-4S] cluster</name>
        <dbReference type="ChEBI" id="CHEBI:49883"/>
    </ligand>
</feature>
<feature type="binding site" evidence="1">
    <location>
        <position position="305"/>
    </location>
    <ligand>
        <name>[4Fe-4S] cluster</name>
        <dbReference type="ChEBI" id="CHEBI:49883"/>
    </ligand>
</feature>
<feature type="binding site" evidence="1">
    <location>
        <position position="312"/>
    </location>
    <ligand>
        <name>[4Fe-4S] cluster</name>
        <dbReference type="ChEBI" id="CHEBI:49883"/>
    </ligand>
</feature>
<accession>B5RCZ2</accession>
<name>ISPG_SALG2</name>